<name>AIM23_CANAL</name>
<sequence length="429" mass="49967">MSLRIILKREFSQCIRVLESGSKSPTIANRFQAQYGNKNNNSKRNTANNGTGNGNRFHNKYNNESRRPYPKTKYQQQQQQQQQQRKPQQHQQYIIDPRKIKFDNGTESARNAIEEIINRVYQLQRNYQIQLITDSGLKKCHLSEILQKLDLSINGLQLIDKSTTTTATTTTPTTNTSDEDLPLIKIITVRDMINQYSTYLNNLKQLELIKLGSSKTLKTLDIKLKLEQKKSTTKEILMKWSINNNDFKLQKTNEIKKLINNNGGNGKSFLINMVYNKRNTNKPIDTIFKRRSNTEEDEQELIEIELQRRQLLIENLQSLLTELNCKWTIEGDINTKMTFNVTPKGQPTTIEPSTTTNIVDEEVEDYNNNNNDDDGDCDEKKMNRTERKKRKSEQQKQKQKQKQQSKTNTNSNTAKEEDLDALYSFKIED</sequence>
<comment type="subcellular location">
    <subcellularLocation>
        <location evidence="1">Mitochondrion</location>
    </subcellularLocation>
</comment>
<comment type="similarity">
    <text evidence="4">Belongs to the AIM23 family.</text>
</comment>
<keyword id="KW-0496">Mitochondrion</keyword>
<keyword id="KW-1185">Reference proteome</keyword>
<keyword id="KW-0809">Transit peptide</keyword>
<feature type="transit peptide" description="Mitochondrion" evidence="2">
    <location>
        <begin position="1"/>
        <end position="18"/>
    </location>
</feature>
<feature type="chain" id="PRO_0000399530" description="Altered inheritance of mitochondria protein 23, mitochondrial">
    <location>
        <begin position="19"/>
        <end position="429"/>
    </location>
</feature>
<feature type="region of interest" description="Disordered" evidence="3">
    <location>
        <begin position="34"/>
        <end position="91"/>
    </location>
</feature>
<feature type="region of interest" description="Disordered" evidence="3">
    <location>
        <begin position="365"/>
        <end position="429"/>
    </location>
</feature>
<feature type="compositionally biased region" description="Low complexity" evidence="3">
    <location>
        <begin position="36"/>
        <end position="50"/>
    </location>
</feature>
<feature type="compositionally biased region" description="Low complexity" evidence="3">
    <location>
        <begin position="75"/>
        <end position="91"/>
    </location>
</feature>
<feature type="compositionally biased region" description="Acidic residues" evidence="3">
    <location>
        <begin position="365"/>
        <end position="377"/>
    </location>
</feature>
<feature type="compositionally biased region" description="Basic residues" evidence="3">
    <location>
        <begin position="386"/>
        <end position="403"/>
    </location>
</feature>
<feature type="compositionally biased region" description="Low complexity" evidence="3">
    <location>
        <begin position="404"/>
        <end position="413"/>
    </location>
</feature>
<accession>Q59YU1</accession>
<accession>A0A1D8PKE4</accession>
<gene>
    <name type="primary">AIM23</name>
    <name type="ordered locus">CAALFM_C305440CA</name>
    <name type="ORF">CaO19.6982</name>
</gene>
<protein>
    <recommendedName>
        <fullName>Altered inheritance of mitochondria protein 23, mitochondrial</fullName>
    </recommendedName>
</protein>
<organism>
    <name type="scientific">Candida albicans (strain SC5314 / ATCC MYA-2876)</name>
    <name type="common">Yeast</name>
    <dbReference type="NCBI Taxonomy" id="237561"/>
    <lineage>
        <taxon>Eukaryota</taxon>
        <taxon>Fungi</taxon>
        <taxon>Dikarya</taxon>
        <taxon>Ascomycota</taxon>
        <taxon>Saccharomycotina</taxon>
        <taxon>Pichiomycetes</taxon>
        <taxon>Debaryomycetaceae</taxon>
        <taxon>Candida/Lodderomyces clade</taxon>
        <taxon>Candida</taxon>
    </lineage>
</organism>
<dbReference type="EMBL" id="CP017625">
    <property type="protein sequence ID" value="AOW28558.1"/>
    <property type="molecule type" value="Genomic_DNA"/>
</dbReference>
<dbReference type="RefSeq" id="XP_714688.2">
    <property type="nucleotide sequence ID" value="XM_709595.2"/>
</dbReference>
<dbReference type="FunCoup" id="Q59YU1">
    <property type="interactions" value="35"/>
</dbReference>
<dbReference type="EnsemblFungi" id="C3_05440C_A-T">
    <property type="protein sequence ID" value="C3_05440C_A-T-p1"/>
    <property type="gene ID" value="C3_05440C_A"/>
</dbReference>
<dbReference type="GeneID" id="3643668"/>
<dbReference type="KEGG" id="cal:CAALFM_C305440CA"/>
<dbReference type="CGD" id="CAL0000184331">
    <property type="gene designation" value="orf19.6982"/>
</dbReference>
<dbReference type="VEuPathDB" id="FungiDB:C3_05440C_A"/>
<dbReference type="eggNOG" id="ENOG502RY27">
    <property type="taxonomic scope" value="Eukaryota"/>
</dbReference>
<dbReference type="HOGENOM" id="CLU_054408_0_0_1"/>
<dbReference type="InParanoid" id="Q59YU1"/>
<dbReference type="OrthoDB" id="3996489at2759"/>
<dbReference type="Proteomes" id="UP000000559">
    <property type="component" value="Chromosome 3"/>
</dbReference>
<dbReference type="GO" id="GO:0005739">
    <property type="term" value="C:mitochondrion"/>
    <property type="evidence" value="ECO:0007669"/>
    <property type="project" value="UniProtKB-SubCell"/>
</dbReference>
<dbReference type="InterPro" id="IPR029427">
    <property type="entry name" value="AIM23"/>
</dbReference>
<dbReference type="Pfam" id="PF14877">
    <property type="entry name" value="mIF3"/>
    <property type="match status" value="1"/>
</dbReference>
<reference key="1">
    <citation type="journal article" date="2004" name="Proc. Natl. Acad. Sci. U.S.A.">
        <title>The diploid genome sequence of Candida albicans.</title>
        <authorList>
            <person name="Jones T."/>
            <person name="Federspiel N.A."/>
            <person name="Chibana H."/>
            <person name="Dungan J."/>
            <person name="Kalman S."/>
            <person name="Magee B.B."/>
            <person name="Newport G."/>
            <person name="Thorstenson Y.R."/>
            <person name="Agabian N."/>
            <person name="Magee P.T."/>
            <person name="Davis R.W."/>
            <person name="Scherer S."/>
        </authorList>
    </citation>
    <scope>NUCLEOTIDE SEQUENCE [LARGE SCALE GENOMIC DNA]</scope>
    <source>
        <strain>SC5314 / ATCC MYA-2876</strain>
    </source>
</reference>
<reference key="2">
    <citation type="journal article" date="2007" name="Genome Biol.">
        <title>Assembly of the Candida albicans genome into sixteen supercontigs aligned on the eight chromosomes.</title>
        <authorList>
            <person name="van het Hoog M."/>
            <person name="Rast T.J."/>
            <person name="Martchenko M."/>
            <person name="Grindle S."/>
            <person name="Dignard D."/>
            <person name="Hogues H."/>
            <person name="Cuomo C."/>
            <person name="Berriman M."/>
            <person name="Scherer S."/>
            <person name="Magee B.B."/>
            <person name="Whiteway M."/>
            <person name="Chibana H."/>
            <person name="Nantel A."/>
            <person name="Magee P.T."/>
        </authorList>
    </citation>
    <scope>GENOME REANNOTATION</scope>
    <source>
        <strain>SC5314 / ATCC MYA-2876</strain>
    </source>
</reference>
<reference key="3">
    <citation type="journal article" date="2013" name="Genome Biol.">
        <title>Assembly of a phased diploid Candida albicans genome facilitates allele-specific measurements and provides a simple model for repeat and indel structure.</title>
        <authorList>
            <person name="Muzzey D."/>
            <person name="Schwartz K."/>
            <person name="Weissman J.S."/>
            <person name="Sherlock G."/>
        </authorList>
    </citation>
    <scope>NUCLEOTIDE SEQUENCE [LARGE SCALE GENOMIC DNA]</scope>
    <scope>GENOME REANNOTATION</scope>
    <source>
        <strain>SC5314 / ATCC MYA-2876</strain>
    </source>
</reference>
<proteinExistence type="inferred from homology"/>
<evidence type="ECO:0000250" key="1"/>
<evidence type="ECO:0000255" key="2"/>
<evidence type="ECO:0000256" key="3">
    <source>
        <dbReference type="SAM" id="MobiDB-lite"/>
    </source>
</evidence>
<evidence type="ECO:0000305" key="4"/>